<name>YF19_SCHPO</name>
<organism>
    <name type="scientific">Schizosaccharomyces pombe (strain 972 / ATCC 24843)</name>
    <name type="common">Fission yeast</name>
    <dbReference type="NCBI Taxonomy" id="284812"/>
    <lineage>
        <taxon>Eukaryota</taxon>
        <taxon>Fungi</taxon>
        <taxon>Dikarya</taxon>
        <taxon>Ascomycota</taxon>
        <taxon>Taphrinomycotina</taxon>
        <taxon>Schizosaccharomycetes</taxon>
        <taxon>Schizosaccharomycetales</taxon>
        <taxon>Schizosaccharomycetaceae</taxon>
        <taxon>Schizosaccharomyces</taxon>
    </lineage>
</organism>
<proteinExistence type="evidence at protein level"/>
<evidence type="ECO:0000250" key="1"/>
<evidence type="ECO:0000255" key="2">
    <source>
        <dbReference type="PROSITE-ProRule" id="PRU10007"/>
    </source>
</evidence>
<evidence type="ECO:0000255" key="3">
    <source>
        <dbReference type="PROSITE-ProRule" id="PRU10008"/>
    </source>
</evidence>
<evidence type="ECO:0000269" key="4">
    <source>
    </source>
</evidence>
<evidence type="ECO:0000305" key="5"/>
<sequence>MSTKLVDHVEITVPTGKTYIQPVGLFINNQHVDSVHGGRVKVYSPSTEKLICEVADADEEDVDIAVKVARAAFQTDAPWRKFSSAQRGRCLSRLADCIEQNLEYLASIETLDNGKSITLARGDVQAAADCFRYYGGWADKDYGQTIETDIKRFAYTRHEPIGVCGQIIPWNFPFLMCAWKIAPAVACGNTIILKTAELTPLSALCLTKFVPECGFPPGVINVLSGDGRRCGNAISSHMDIDKVAFTGSTGVGRMVMRAAASSNLKKVTLELGGKSPNIVFNDADLDSAAVWTNYGIFYNSGQVCCAGSRVYVQEDVYDEFIKRMVAKAKTLKVGDPFAEDTFQGAQVSKQQYERIVSYIESGIAHGAKLEIGGKRHGNLGYFVEPTILSNVTEDMAVGKEEIFGPVLAVIKFKTIEEAIRRGNNSTYGLAAGVHTNNITNAIKVSNALEAGTVWVNCYNLLHHQIPFGGYKESGIGRELGSYGLTNYTQTKAVHINLGMDSPI</sequence>
<accession>O14293</accession>
<accession>P78895</accession>
<protein>
    <recommendedName>
        <fullName>Putative aldehyde dehydrogenase-like protein C9E9.09c</fullName>
        <ecNumber>1.2.1.-</ecNumber>
    </recommendedName>
</protein>
<dbReference type="EC" id="1.2.1.-"/>
<dbReference type="EMBL" id="CU329670">
    <property type="protein sequence ID" value="CAB16407.1"/>
    <property type="molecule type" value="Genomic_DNA"/>
</dbReference>
<dbReference type="EMBL" id="D89246">
    <property type="protein sequence ID" value="BAA13907.1"/>
    <property type="molecule type" value="mRNA"/>
</dbReference>
<dbReference type="PIR" id="T39216">
    <property type="entry name" value="T39216"/>
</dbReference>
<dbReference type="PIR" id="T43153">
    <property type="entry name" value="T43153"/>
</dbReference>
<dbReference type="SMR" id="O14293"/>
<dbReference type="BioGRID" id="279414">
    <property type="interactions" value="77"/>
</dbReference>
<dbReference type="FunCoup" id="O14293">
    <property type="interactions" value="322"/>
</dbReference>
<dbReference type="STRING" id="284812.O14293"/>
<dbReference type="iPTMnet" id="O14293"/>
<dbReference type="PaxDb" id="4896-SPAC9E9.09c.1"/>
<dbReference type="EnsemblFungi" id="SPAC9E9.09c.1">
    <property type="protein sequence ID" value="SPAC9E9.09c.1:pep"/>
    <property type="gene ID" value="SPAC9E9.09c"/>
</dbReference>
<dbReference type="KEGG" id="spo:2542976"/>
<dbReference type="PomBase" id="SPAC9E9.09c"/>
<dbReference type="VEuPathDB" id="FungiDB:SPAC9E9.09c"/>
<dbReference type="eggNOG" id="KOG2450">
    <property type="taxonomic scope" value="Eukaryota"/>
</dbReference>
<dbReference type="HOGENOM" id="CLU_005391_0_0_1"/>
<dbReference type="InParanoid" id="O14293"/>
<dbReference type="OMA" id="GQLIMQY"/>
<dbReference type="PhylomeDB" id="O14293"/>
<dbReference type="Reactome" id="R-SPO-380612">
    <property type="pathway name" value="Metabolism of serotonin"/>
</dbReference>
<dbReference type="Reactome" id="R-SPO-445355">
    <property type="pathway name" value="Smooth Muscle Contraction"/>
</dbReference>
<dbReference type="Reactome" id="R-SPO-5365859">
    <property type="pathway name" value="RA biosynthesis pathway"/>
</dbReference>
<dbReference type="Reactome" id="R-SPO-70350">
    <property type="pathway name" value="Fructose catabolism"/>
</dbReference>
<dbReference type="Reactome" id="R-SPO-71384">
    <property type="pathway name" value="Ethanol oxidation"/>
</dbReference>
<dbReference type="Reactome" id="R-SPO-9837999">
    <property type="pathway name" value="Mitochondrial protein degradation"/>
</dbReference>
<dbReference type="PRO" id="PR:O14293"/>
<dbReference type="Proteomes" id="UP000002485">
    <property type="component" value="Chromosome I"/>
</dbReference>
<dbReference type="GO" id="GO:0005737">
    <property type="term" value="C:cytoplasm"/>
    <property type="evidence" value="ECO:0007005"/>
    <property type="project" value="PomBase"/>
</dbReference>
<dbReference type="GO" id="GO:0005829">
    <property type="term" value="C:cytosol"/>
    <property type="evidence" value="ECO:0007005"/>
    <property type="project" value="PomBase"/>
</dbReference>
<dbReference type="GO" id="GO:0005794">
    <property type="term" value="C:Golgi apparatus"/>
    <property type="evidence" value="ECO:0007005"/>
    <property type="project" value="PomBase"/>
</dbReference>
<dbReference type="GO" id="GO:0005759">
    <property type="term" value="C:mitochondrial matrix"/>
    <property type="evidence" value="ECO:0000250"/>
    <property type="project" value="PomBase"/>
</dbReference>
<dbReference type="GO" id="GO:0005634">
    <property type="term" value="C:nucleus"/>
    <property type="evidence" value="ECO:0007005"/>
    <property type="project" value="PomBase"/>
</dbReference>
<dbReference type="GO" id="GO:0004029">
    <property type="term" value="F:aldehyde dehydrogenase (NAD+) activity"/>
    <property type="evidence" value="ECO:0000318"/>
    <property type="project" value="GO_Central"/>
</dbReference>
<dbReference type="GO" id="GO:0019413">
    <property type="term" value="P:acetate biosynthetic process"/>
    <property type="evidence" value="ECO:0000266"/>
    <property type="project" value="PomBase"/>
</dbReference>
<dbReference type="GO" id="GO:0006068">
    <property type="term" value="P:ethanol catabolic process"/>
    <property type="evidence" value="ECO:0000250"/>
    <property type="project" value="PomBase"/>
</dbReference>
<dbReference type="CDD" id="cd07143">
    <property type="entry name" value="ALDH_AldA_AN0554"/>
    <property type="match status" value="1"/>
</dbReference>
<dbReference type="FunFam" id="3.40.605.10:FF:000050">
    <property type="entry name" value="Aldehyde dehydrogenase, mitochondrial"/>
    <property type="match status" value="1"/>
</dbReference>
<dbReference type="FunFam" id="3.40.605.10:FF:000026">
    <property type="entry name" value="Aldehyde dehydrogenase, putative"/>
    <property type="match status" value="1"/>
</dbReference>
<dbReference type="FunFam" id="3.40.309.10:FF:000001">
    <property type="entry name" value="Mitochondrial aldehyde dehydrogenase 2"/>
    <property type="match status" value="1"/>
</dbReference>
<dbReference type="Gene3D" id="3.40.605.10">
    <property type="entry name" value="Aldehyde Dehydrogenase, Chain A, domain 1"/>
    <property type="match status" value="1"/>
</dbReference>
<dbReference type="Gene3D" id="3.40.309.10">
    <property type="entry name" value="Aldehyde Dehydrogenase, Chain A, domain 2"/>
    <property type="match status" value="1"/>
</dbReference>
<dbReference type="InterPro" id="IPR016161">
    <property type="entry name" value="Ald_DH/histidinol_DH"/>
</dbReference>
<dbReference type="InterPro" id="IPR016163">
    <property type="entry name" value="Ald_DH_C"/>
</dbReference>
<dbReference type="InterPro" id="IPR016160">
    <property type="entry name" value="Ald_DH_CS_CYS"/>
</dbReference>
<dbReference type="InterPro" id="IPR029510">
    <property type="entry name" value="Ald_DH_CS_GLU"/>
</dbReference>
<dbReference type="InterPro" id="IPR016162">
    <property type="entry name" value="Ald_DH_N"/>
</dbReference>
<dbReference type="InterPro" id="IPR015590">
    <property type="entry name" value="Aldehyde_DH_dom"/>
</dbReference>
<dbReference type="PANTHER" id="PTHR11699">
    <property type="entry name" value="ALDEHYDE DEHYDROGENASE-RELATED"/>
    <property type="match status" value="1"/>
</dbReference>
<dbReference type="Pfam" id="PF00171">
    <property type="entry name" value="Aldedh"/>
    <property type="match status" value="1"/>
</dbReference>
<dbReference type="SUPFAM" id="SSF53720">
    <property type="entry name" value="ALDH-like"/>
    <property type="match status" value="1"/>
</dbReference>
<dbReference type="PROSITE" id="PS00070">
    <property type="entry name" value="ALDEHYDE_DEHYDR_CYS"/>
    <property type="match status" value="1"/>
</dbReference>
<dbReference type="PROSITE" id="PS00687">
    <property type="entry name" value="ALDEHYDE_DEHYDR_GLU"/>
    <property type="match status" value="1"/>
</dbReference>
<feature type="chain" id="PRO_0000056595" description="Putative aldehyde dehydrogenase-like protein C9E9.09c">
    <location>
        <begin position="1"/>
        <end position="503"/>
    </location>
</feature>
<feature type="active site" description="Proton acceptor" evidence="2 3">
    <location>
        <position position="270"/>
    </location>
</feature>
<feature type="active site" description="Nucleophile" evidence="2 3">
    <location>
        <position position="304"/>
    </location>
</feature>
<feature type="binding site" evidence="1">
    <location>
        <begin position="247"/>
        <end position="252"/>
    </location>
    <ligand>
        <name>NAD(+)</name>
        <dbReference type="ChEBI" id="CHEBI:57540"/>
    </ligand>
</feature>
<feature type="site" description="Transition state stabilizer" evidence="1">
    <location>
        <position position="171"/>
    </location>
</feature>
<feature type="modified residue" description="Phosphoserine" evidence="4">
    <location>
        <position position="248"/>
    </location>
</feature>
<feature type="modified residue" description="Phosphoserine" evidence="4">
    <location>
        <position position="501"/>
    </location>
</feature>
<feature type="sequence conflict" description="In Ref. 2; BAA13907." evidence="5" ref="2">
    <original>N</original>
    <variation>Y</variation>
    <location>
        <position position="378"/>
    </location>
</feature>
<comment type="similarity">
    <text evidence="5">Belongs to the aldehyde dehydrogenase family.</text>
</comment>
<reference key="1">
    <citation type="journal article" date="2002" name="Nature">
        <title>The genome sequence of Schizosaccharomyces pombe.</title>
        <authorList>
            <person name="Wood V."/>
            <person name="Gwilliam R."/>
            <person name="Rajandream M.A."/>
            <person name="Lyne M.H."/>
            <person name="Lyne R."/>
            <person name="Stewart A."/>
            <person name="Sgouros J.G."/>
            <person name="Peat N."/>
            <person name="Hayles J."/>
            <person name="Baker S.G."/>
            <person name="Basham D."/>
            <person name="Bowman S."/>
            <person name="Brooks K."/>
            <person name="Brown D."/>
            <person name="Brown S."/>
            <person name="Chillingworth T."/>
            <person name="Churcher C.M."/>
            <person name="Collins M."/>
            <person name="Connor R."/>
            <person name="Cronin A."/>
            <person name="Davis P."/>
            <person name="Feltwell T."/>
            <person name="Fraser A."/>
            <person name="Gentles S."/>
            <person name="Goble A."/>
            <person name="Hamlin N."/>
            <person name="Harris D.E."/>
            <person name="Hidalgo J."/>
            <person name="Hodgson G."/>
            <person name="Holroyd S."/>
            <person name="Hornsby T."/>
            <person name="Howarth S."/>
            <person name="Huckle E.J."/>
            <person name="Hunt S."/>
            <person name="Jagels K."/>
            <person name="James K.D."/>
            <person name="Jones L."/>
            <person name="Jones M."/>
            <person name="Leather S."/>
            <person name="McDonald S."/>
            <person name="McLean J."/>
            <person name="Mooney P."/>
            <person name="Moule S."/>
            <person name="Mungall K.L."/>
            <person name="Murphy L.D."/>
            <person name="Niblett D."/>
            <person name="Odell C."/>
            <person name="Oliver K."/>
            <person name="O'Neil S."/>
            <person name="Pearson D."/>
            <person name="Quail M.A."/>
            <person name="Rabbinowitsch E."/>
            <person name="Rutherford K.M."/>
            <person name="Rutter S."/>
            <person name="Saunders D."/>
            <person name="Seeger K."/>
            <person name="Sharp S."/>
            <person name="Skelton J."/>
            <person name="Simmonds M.N."/>
            <person name="Squares R."/>
            <person name="Squares S."/>
            <person name="Stevens K."/>
            <person name="Taylor K."/>
            <person name="Taylor R.G."/>
            <person name="Tivey A."/>
            <person name="Walsh S.V."/>
            <person name="Warren T."/>
            <person name="Whitehead S."/>
            <person name="Woodward J.R."/>
            <person name="Volckaert G."/>
            <person name="Aert R."/>
            <person name="Robben J."/>
            <person name="Grymonprez B."/>
            <person name="Weltjens I."/>
            <person name="Vanstreels E."/>
            <person name="Rieger M."/>
            <person name="Schaefer M."/>
            <person name="Mueller-Auer S."/>
            <person name="Gabel C."/>
            <person name="Fuchs M."/>
            <person name="Duesterhoeft A."/>
            <person name="Fritzc C."/>
            <person name="Holzer E."/>
            <person name="Moestl D."/>
            <person name="Hilbert H."/>
            <person name="Borzym K."/>
            <person name="Langer I."/>
            <person name="Beck A."/>
            <person name="Lehrach H."/>
            <person name="Reinhardt R."/>
            <person name="Pohl T.M."/>
            <person name="Eger P."/>
            <person name="Zimmermann W."/>
            <person name="Wedler H."/>
            <person name="Wambutt R."/>
            <person name="Purnelle B."/>
            <person name="Goffeau A."/>
            <person name="Cadieu E."/>
            <person name="Dreano S."/>
            <person name="Gloux S."/>
            <person name="Lelaure V."/>
            <person name="Mottier S."/>
            <person name="Galibert F."/>
            <person name="Aves S.J."/>
            <person name="Xiang Z."/>
            <person name="Hunt C."/>
            <person name="Moore K."/>
            <person name="Hurst S.M."/>
            <person name="Lucas M."/>
            <person name="Rochet M."/>
            <person name="Gaillardin C."/>
            <person name="Tallada V.A."/>
            <person name="Garzon A."/>
            <person name="Thode G."/>
            <person name="Daga R.R."/>
            <person name="Cruzado L."/>
            <person name="Jimenez J."/>
            <person name="Sanchez M."/>
            <person name="del Rey F."/>
            <person name="Benito J."/>
            <person name="Dominguez A."/>
            <person name="Revuelta J.L."/>
            <person name="Moreno S."/>
            <person name="Armstrong J."/>
            <person name="Forsburg S.L."/>
            <person name="Cerutti L."/>
            <person name="Lowe T."/>
            <person name="McCombie W.R."/>
            <person name="Paulsen I."/>
            <person name="Potashkin J."/>
            <person name="Shpakovski G.V."/>
            <person name="Ussery D."/>
            <person name="Barrell B.G."/>
            <person name="Nurse P."/>
        </authorList>
    </citation>
    <scope>NUCLEOTIDE SEQUENCE [LARGE SCALE GENOMIC DNA]</scope>
    <source>
        <strain>972 / ATCC 24843</strain>
    </source>
</reference>
<reference key="2">
    <citation type="journal article" date="1997" name="DNA Res.">
        <title>Identification of open reading frames in Schizosaccharomyces pombe cDNAs.</title>
        <authorList>
            <person name="Yoshioka S."/>
            <person name="Kato K."/>
            <person name="Nakai K."/>
            <person name="Okayama H."/>
            <person name="Nojima H."/>
        </authorList>
    </citation>
    <scope>NUCLEOTIDE SEQUENCE [LARGE SCALE MRNA] OF 254-503</scope>
    <source>
        <strain>PR745</strain>
    </source>
</reference>
<reference key="3">
    <citation type="journal article" date="2008" name="J. Proteome Res.">
        <title>Phosphoproteome analysis of fission yeast.</title>
        <authorList>
            <person name="Wilson-Grady J.T."/>
            <person name="Villen J."/>
            <person name="Gygi S.P."/>
        </authorList>
    </citation>
    <scope>PHOSPHORYLATION [LARGE SCALE ANALYSIS] AT SER-248 AND SER-501</scope>
    <scope>IDENTIFICATION BY MASS SPECTROMETRY</scope>
</reference>
<gene>
    <name type="ORF">SPAC9E9.09c</name>
</gene>
<keyword id="KW-0520">NAD</keyword>
<keyword id="KW-0560">Oxidoreductase</keyword>
<keyword id="KW-0597">Phosphoprotein</keyword>
<keyword id="KW-1185">Reference proteome</keyword>